<reference key="1">
    <citation type="submission" date="2007-03" db="EMBL/GenBank/DDBJ databases">
        <title>Sequencing analysis of Barbarea verna chloroplast DNA.</title>
        <authorList>
            <person name="Hosouchi T."/>
            <person name="Tsuruoka H."/>
            <person name="Kotani H."/>
        </authorList>
    </citation>
    <scope>NUCLEOTIDE SEQUENCE [LARGE SCALE GENOMIC DNA]</scope>
</reference>
<geneLocation type="chloroplast"/>
<sequence>MKIRASVRKICEKCRLIRRRGRIIVICSNPRHKQRQG</sequence>
<organism>
    <name type="scientific">Barbarea verna</name>
    <name type="common">Land cress</name>
    <name type="synonym">Erysimum vernum</name>
    <dbReference type="NCBI Taxonomy" id="50458"/>
    <lineage>
        <taxon>Eukaryota</taxon>
        <taxon>Viridiplantae</taxon>
        <taxon>Streptophyta</taxon>
        <taxon>Embryophyta</taxon>
        <taxon>Tracheophyta</taxon>
        <taxon>Spermatophyta</taxon>
        <taxon>Magnoliopsida</taxon>
        <taxon>eudicotyledons</taxon>
        <taxon>Gunneridae</taxon>
        <taxon>Pentapetalae</taxon>
        <taxon>rosids</taxon>
        <taxon>malvids</taxon>
        <taxon>Brassicales</taxon>
        <taxon>Brassicaceae</taxon>
        <taxon>Cardamineae</taxon>
        <taxon>Barbarea</taxon>
    </lineage>
</organism>
<dbReference type="EMBL" id="AP009370">
    <property type="protein sequence ID" value="BAF50144.1"/>
    <property type="molecule type" value="Genomic_DNA"/>
</dbReference>
<dbReference type="RefSeq" id="YP_001123320.1">
    <property type="nucleotide sequence ID" value="NC_009269.1"/>
</dbReference>
<dbReference type="SMR" id="A4QKD9"/>
<dbReference type="GeneID" id="4961867"/>
<dbReference type="GO" id="GO:0009507">
    <property type="term" value="C:chloroplast"/>
    <property type="evidence" value="ECO:0007669"/>
    <property type="project" value="UniProtKB-SubCell"/>
</dbReference>
<dbReference type="GO" id="GO:1990904">
    <property type="term" value="C:ribonucleoprotein complex"/>
    <property type="evidence" value="ECO:0007669"/>
    <property type="project" value="UniProtKB-KW"/>
</dbReference>
<dbReference type="GO" id="GO:0005840">
    <property type="term" value="C:ribosome"/>
    <property type="evidence" value="ECO:0007669"/>
    <property type="project" value="UniProtKB-KW"/>
</dbReference>
<dbReference type="GO" id="GO:0003735">
    <property type="term" value="F:structural constituent of ribosome"/>
    <property type="evidence" value="ECO:0007669"/>
    <property type="project" value="InterPro"/>
</dbReference>
<dbReference type="GO" id="GO:0006412">
    <property type="term" value="P:translation"/>
    <property type="evidence" value="ECO:0007669"/>
    <property type="project" value="UniProtKB-UniRule"/>
</dbReference>
<dbReference type="HAMAP" id="MF_00251">
    <property type="entry name" value="Ribosomal_bL36"/>
    <property type="match status" value="1"/>
</dbReference>
<dbReference type="InterPro" id="IPR000473">
    <property type="entry name" value="Ribosomal_bL36"/>
</dbReference>
<dbReference type="InterPro" id="IPR035977">
    <property type="entry name" value="Ribosomal_bL36_sp"/>
</dbReference>
<dbReference type="NCBIfam" id="TIGR01022">
    <property type="entry name" value="rpmJ_bact"/>
    <property type="match status" value="1"/>
</dbReference>
<dbReference type="PANTHER" id="PTHR42888">
    <property type="entry name" value="50S RIBOSOMAL PROTEIN L36, CHLOROPLASTIC"/>
    <property type="match status" value="1"/>
</dbReference>
<dbReference type="PANTHER" id="PTHR42888:SF1">
    <property type="entry name" value="LARGE RIBOSOMAL SUBUNIT PROTEIN BL36C"/>
    <property type="match status" value="1"/>
</dbReference>
<dbReference type="Pfam" id="PF00444">
    <property type="entry name" value="Ribosomal_L36"/>
    <property type="match status" value="1"/>
</dbReference>
<dbReference type="SUPFAM" id="SSF57840">
    <property type="entry name" value="Ribosomal protein L36"/>
    <property type="match status" value="1"/>
</dbReference>
<dbReference type="PROSITE" id="PS00828">
    <property type="entry name" value="RIBOSOMAL_L36"/>
    <property type="match status" value="1"/>
</dbReference>
<comment type="subcellular location">
    <subcellularLocation>
        <location>Plastid</location>
        <location>Chloroplast</location>
    </subcellularLocation>
</comment>
<comment type="similarity">
    <text evidence="1">Belongs to the bacterial ribosomal protein bL36 family.</text>
</comment>
<proteinExistence type="inferred from homology"/>
<evidence type="ECO:0000255" key="1">
    <source>
        <dbReference type="HAMAP-Rule" id="MF_00251"/>
    </source>
</evidence>
<evidence type="ECO:0000305" key="2"/>
<feature type="chain" id="PRO_0000344744" description="Large ribosomal subunit protein bL36c">
    <location>
        <begin position="1"/>
        <end position="37"/>
    </location>
</feature>
<name>RK36_BARVE</name>
<protein>
    <recommendedName>
        <fullName evidence="1">Large ribosomal subunit protein bL36c</fullName>
    </recommendedName>
    <alternativeName>
        <fullName evidence="2">50S ribosomal protein L36, chloroplastic</fullName>
    </alternativeName>
</protein>
<accession>A4QKD9</accession>
<keyword id="KW-0150">Chloroplast</keyword>
<keyword id="KW-0934">Plastid</keyword>
<keyword id="KW-0687">Ribonucleoprotein</keyword>
<keyword id="KW-0689">Ribosomal protein</keyword>
<gene>
    <name evidence="1" type="primary">rpl36</name>
</gene>